<sequence>MAEAAAPGTTVTTSGAGAAAAEAAETAEAVSPTPIPTVTAPSPRAGGGVGGSDGSDGSGGRGDSGAYDGSGACGGSDACDGSGDSSGDSWTKQVTCRYFKYGICKEGDNCRYSHDLSDRLCGVVCKYFQRGCCVYGDRCRCEHSKPLKQEEATATELTTKSSLAASSSLSSIVGPLVEMNTNEAESRNSNFATVVAGSEDWANAIEFVPGQPYCGRTVPSCTEAPLQGSVTKEESEEEQTAVETKKQLCPYAAVGQCRYGENCVYLHGDLCDMCGLQVLHPMDAAQRSQHIQACIEAHEKDMEFSFAVQRSKDKVCGICMEVVYEKANPNEHRFGILSNCNHTFCLKCIRKWRSAKEFESRIVKSCPQCRITSNFVIPSEYWVEEKEEKQKLIQKYKEAMSNKACKYFDEGRGSCPFGENCFYKHMYPDGRREEPQRQQVGTSSRNPGQQRNHFWEFFEEGANSNPFDDEEEAVTFELGEMLLML</sequence>
<keyword id="KW-0479">Metal-binding</keyword>
<keyword id="KW-1267">Proteomics identification</keyword>
<keyword id="KW-1185">Reference proteome</keyword>
<keyword id="KW-0677">Repeat</keyword>
<keyword id="KW-0808">Transferase</keyword>
<keyword id="KW-0833">Ubl conjugation pathway</keyword>
<keyword id="KW-0862">Zinc</keyword>
<keyword id="KW-0863">Zinc-finger</keyword>
<organism>
    <name type="scientific">Homo sapiens</name>
    <name type="common">Human</name>
    <dbReference type="NCBI Taxonomy" id="9606"/>
    <lineage>
        <taxon>Eukaryota</taxon>
        <taxon>Metazoa</taxon>
        <taxon>Chordata</taxon>
        <taxon>Craniata</taxon>
        <taxon>Vertebrata</taxon>
        <taxon>Euteleostomi</taxon>
        <taxon>Mammalia</taxon>
        <taxon>Eutheria</taxon>
        <taxon>Euarchontoglires</taxon>
        <taxon>Primates</taxon>
        <taxon>Haplorrhini</taxon>
        <taxon>Catarrhini</taxon>
        <taxon>Hominidae</taxon>
        <taxon>Homo</taxon>
    </lineage>
</organism>
<evidence type="ECO:0000250" key="1"/>
<evidence type="ECO:0000255" key="2">
    <source>
        <dbReference type="PROSITE-ProRule" id="PRU00175"/>
    </source>
</evidence>
<evidence type="ECO:0000255" key="3">
    <source>
        <dbReference type="PROSITE-ProRule" id="PRU00723"/>
    </source>
</evidence>
<evidence type="ECO:0000256" key="4">
    <source>
        <dbReference type="SAM" id="MobiDB-lite"/>
    </source>
</evidence>
<evidence type="ECO:0000305" key="5"/>
<dbReference type="EC" id="2.3.2.27"/>
<dbReference type="EMBL" id="U41315">
    <property type="protein sequence ID" value="AAA99070.1"/>
    <property type="molecule type" value="Genomic_DNA"/>
</dbReference>
<dbReference type="FunCoup" id="Q13434">
    <property type="interactions" value="93"/>
</dbReference>
<dbReference type="IntAct" id="Q13434">
    <property type="interactions" value="6"/>
</dbReference>
<dbReference type="GlyGen" id="Q13434">
    <property type="glycosylation" value="1 site"/>
</dbReference>
<dbReference type="iPTMnet" id="Q13434"/>
<dbReference type="PhosphoSitePlus" id="Q13434"/>
<dbReference type="BioMuta" id="HGNC:7115"/>
<dbReference type="DMDM" id="17368441"/>
<dbReference type="jPOST" id="Q13434"/>
<dbReference type="MassIVE" id="Q13434"/>
<dbReference type="ProteomicsDB" id="59430"/>
<dbReference type="Pumba" id="Q13434"/>
<dbReference type="AGR" id="HGNC:7115"/>
<dbReference type="GeneCards" id="MKRN4P"/>
<dbReference type="HGNC" id="HGNC:7115">
    <property type="gene designation" value="MKRN4P"/>
</dbReference>
<dbReference type="neXtProt" id="NX_Q13434"/>
<dbReference type="PharmGKB" id="PA30834"/>
<dbReference type="InParanoid" id="Q13434"/>
<dbReference type="PAN-GO" id="Q13434">
    <property type="GO annotations" value="2 GO annotations based on evolutionary models"/>
</dbReference>
<dbReference type="PhylomeDB" id="Q13434"/>
<dbReference type="PathwayCommons" id="Q13434"/>
<dbReference type="SignaLink" id="Q13434"/>
<dbReference type="SIGNOR" id="Q13434"/>
<dbReference type="UniPathway" id="UPA00143"/>
<dbReference type="Pharos" id="Q13434">
    <property type="development level" value="Tdark"/>
</dbReference>
<dbReference type="Proteomes" id="UP000005640">
    <property type="component" value="Unplaced"/>
</dbReference>
<dbReference type="RNAct" id="Q13434">
    <property type="molecule type" value="protein"/>
</dbReference>
<dbReference type="GO" id="GO:0061630">
    <property type="term" value="F:ubiquitin protein ligase activity"/>
    <property type="evidence" value="ECO:0000318"/>
    <property type="project" value="GO_Central"/>
</dbReference>
<dbReference type="GO" id="GO:0008270">
    <property type="term" value="F:zinc ion binding"/>
    <property type="evidence" value="ECO:0007669"/>
    <property type="project" value="UniProtKB-KW"/>
</dbReference>
<dbReference type="GO" id="GO:0000209">
    <property type="term" value="P:protein polyubiquitination"/>
    <property type="evidence" value="ECO:0007669"/>
    <property type="project" value="InterPro"/>
</dbReference>
<dbReference type="GO" id="GO:0016567">
    <property type="term" value="P:protein ubiquitination"/>
    <property type="evidence" value="ECO:0000318"/>
    <property type="project" value="GO_Central"/>
</dbReference>
<dbReference type="CDD" id="cd16730">
    <property type="entry name" value="RING-HC_MKRN1_3"/>
    <property type="match status" value="1"/>
</dbReference>
<dbReference type="FunFam" id="3.30.40.10:FF:000117">
    <property type="entry name" value="Probable E3 ubiquitin-protein ligase makorin-1"/>
    <property type="match status" value="1"/>
</dbReference>
<dbReference type="Gene3D" id="2.30.30.1190">
    <property type="match status" value="1"/>
</dbReference>
<dbReference type="Gene3D" id="3.30.1370.210">
    <property type="match status" value="1"/>
</dbReference>
<dbReference type="Gene3D" id="4.10.1000.10">
    <property type="entry name" value="Zinc finger, CCCH-type"/>
    <property type="match status" value="1"/>
</dbReference>
<dbReference type="Gene3D" id="3.30.40.10">
    <property type="entry name" value="Zinc/RING finger domain, C3HC4 (zinc finger)"/>
    <property type="match status" value="1"/>
</dbReference>
<dbReference type="InterPro" id="IPR045072">
    <property type="entry name" value="MKRN-like"/>
</dbReference>
<dbReference type="InterPro" id="IPR031644">
    <property type="entry name" value="MKRN1_C"/>
</dbReference>
<dbReference type="InterPro" id="IPR041367">
    <property type="entry name" value="Znf-CCCH_4"/>
</dbReference>
<dbReference type="InterPro" id="IPR018957">
    <property type="entry name" value="Znf_C3HC4_RING-type"/>
</dbReference>
<dbReference type="InterPro" id="IPR000571">
    <property type="entry name" value="Znf_CCCH"/>
</dbReference>
<dbReference type="InterPro" id="IPR036855">
    <property type="entry name" value="Znf_CCCH_sf"/>
</dbReference>
<dbReference type="InterPro" id="IPR001841">
    <property type="entry name" value="Znf_RING"/>
</dbReference>
<dbReference type="InterPro" id="IPR013083">
    <property type="entry name" value="Znf_RING/FYVE/PHD"/>
</dbReference>
<dbReference type="InterPro" id="IPR017907">
    <property type="entry name" value="Znf_RING_CS"/>
</dbReference>
<dbReference type="PANTHER" id="PTHR11224:SF53">
    <property type="entry name" value="E3 UBIQUITIN-PROTEIN LIGASE MAKORIN-4-RELATED"/>
    <property type="match status" value="1"/>
</dbReference>
<dbReference type="PANTHER" id="PTHR11224">
    <property type="entry name" value="MAKORIN-RELATED"/>
    <property type="match status" value="1"/>
</dbReference>
<dbReference type="Pfam" id="PF15815">
    <property type="entry name" value="MKRN1_C"/>
    <property type="match status" value="1"/>
</dbReference>
<dbReference type="Pfam" id="PF00097">
    <property type="entry name" value="zf-C3HC4"/>
    <property type="match status" value="1"/>
</dbReference>
<dbReference type="Pfam" id="PF00642">
    <property type="entry name" value="zf-CCCH"/>
    <property type="match status" value="1"/>
</dbReference>
<dbReference type="Pfam" id="PF14608">
    <property type="entry name" value="zf-CCCH_2"/>
    <property type="match status" value="1"/>
</dbReference>
<dbReference type="Pfam" id="PF18044">
    <property type="entry name" value="zf-CCCH_4"/>
    <property type="match status" value="2"/>
</dbReference>
<dbReference type="SMART" id="SM00184">
    <property type="entry name" value="RING"/>
    <property type="match status" value="1"/>
</dbReference>
<dbReference type="SMART" id="SM00356">
    <property type="entry name" value="ZnF_C3H1"/>
    <property type="match status" value="4"/>
</dbReference>
<dbReference type="SUPFAM" id="SSF90229">
    <property type="entry name" value="CCCH zinc finger"/>
    <property type="match status" value="2"/>
</dbReference>
<dbReference type="SUPFAM" id="SSF57850">
    <property type="entry name" value="RING/U-box"/>
    <property type="match status" value="1"/>
</dbReference>
<dbReference type="PROSITE" id="PS50103">
    <property type="entry name" value="ZF_C3H1"/>
    <property type="match status" value="4"/>
</dbReference>
<dbReference type="PROSITE" id="PS00518">
    <property type="entry name" value="ZF_RING_1"/>
    <property type="match status" value="1"/>
</dbReference>
<dbReference type="PROSITE" id="PS50089">
    <property type="entry name" value="ZF_RING_2"/>
    <property type="match status" value="1"/>
</dbReference>
<reference key="1">
    <citation type="submission" date="1995-11" db="EMBL/GenBank/DDBJ databases">
        <title>An X-linked homologue of the autosomal imprinted gene ZNF127 escapes X chromosome inactivation.</title>
        <authorList>
            <person name="Hendrich B.D."/>
            <person name="Longstreet M."/>
            <person name="Gustashaw K."/>
            <person name="Nicholls R.D."/>
            <person name="Willard H.F."/>
        </authorList>
    </citation>
    <scope>NUCLEOTIDE SEQUENCE [GENOMIC DNA]</scope>
</reference>
<comment type="function">
    <text evidence="1">May act as a E3 ubiquitin ligase catalyzing the covalent attachment of ubiquitin moieties onto substrate proteins.</text>
</comment>
<comment type="catalytic activity">
    <reaction>
        <text>S-ubiquitinyl-[E2 ubiquitin-conjugating enzyme]-L-cysteine + [acceptor protein]-L-lysine = [E2 ubiquitin-conjugating enzyme]-L-cysteine + N(6)-ubiquitinyl-[acceptor protein]-L-lysine.</text>
        <dbReference type="EC" id="2.3.2.27"/>
    </reaction>
</comment>
<comment type="pathway">
    <text>Protein modification; protein ubiquitination.</text>
</comment>
<comment type="caution">
    <text evidence="5">Could be the product of a pseudogene.</text>
</comment>
<protein>
    <recommendedName>
        <fullName>Putative E3 ubiquitin-protein ligase makorin-4</fullName>
        <ecNumber>2.3.2.27</ecNumber>
    </recommendedName>
    <alternativeName>
        <fullName>Makorin RING finger protein pseudogene 4</fullName>
    </alternativeName>
    <alternativeName>
        <fullName>Makorin RING finger protein pseudogene 5</fullName>
    </alternativeName>
    <alternativeName>
        <fullName>RING finger protein 64</fullName>
    </alternativeName>
    <alternativeName>
        <fullName evidence="5">RING-type E3 ubiquitin transferase makorin-4</fullName>
    </alternativeName>
    <alternativeName>
        <fullName>Zinc finger protein 127-Xp</fullName>
        <shortName>ZNF127-Xp</shortName>
    </alternativeName>
    <alternativeName>
        <fullName>Zinc finger protein 127-like 1</fullName>
    </alternativeName>
</protein>
<accession>Q13434</accession>
<proteinExistence type="uncertain"/>
<gene>
    <name type="primary">MKRN4P</name>
    <name type="synonym">MKRN4</name>
    <name type="synonym">MKRNP5</name>
    <name type="synonym">RNF64</name>
    <name type="synonym">ZNF127L1</name>
</gene>
<name>MKRN4_HUMAN</name>
<feature type="chain" id="PRO_0000055961" description="Putative E3 ubiquitin-protein ligase makorin-4">
    <location>
        <begin position="1"/>
        <end position="485"/>
    </location>
</feature>
<feature type="zinc finger region" description="C3H1-type 1" evidence="3">
    <location>
        <begin position="90"/>
        <end position="117"/>
    </location>
</feature>
<feature type="zinc finger region" description="C3H1-type 2" evidence="3">
    <location>
        <begin position="124"/>
        <end position="146"/>
    </location>
</feature>
<feature type="zinc finger region" description="C3H1-type 3" evidence="3">
    <location>
        <begin position="243"/>
        <end position="270"/>
    </location>
</feature>
<feature type="zinc finger region" description="RING-type" evidence="2">
    <location>
        <begin position="316"/>
        <end position="370"/>
    </location>
</feature>
<feature type="zinc finger region" description="C3H1-type 4" evidence="3">
    <location>
        <begin position="399"/>
        <end position="428"/>
    </location>
</feature>
<feature type="region of interest" description="Disordered" evidence="4">
    <location>
        <begin position="1"/>
        <end position="63"/>
    </location>
</feature>
<feature type="region of interest" description="Makorin-type Cys-His">
    <location>
        <begin position="271"/>
        <end position="298"/>
    </location>
</feature>
<feature type="compositionally biased region" description="Low complexity" evidence="4">
    <location>
        <begin position="1"/>
        <end position="32"/>
    </location>
</feature>
<feature type="compositionally biased region" description="Gly residues" evidence="4">
    <location>
        <begin position="45"/>
        <end position="63"/>
    </location>
</feature>